<protein>
    <recommendedName>
        <fullName>Apolipoprotein A-I</fullName>
        <shortName>Apo-AI</shortName>
        <shortName>ApoA-I</shortName>
    </recommendedName>
    <alternativeName>
        <fullName>Apolipoprotein A1</fullName>
    </alternativeName>
    <component>
        <recommendedName>
            <fullName>Truncated apolipoprotein A-I</fullName>
        </recommendedName>
    </component>
</protein>
<organism>
    <name type="scientific">Panthera tigris altaica</name>
    <name type="common">Siberian tiger</name>
    <dbReference type="NCBI Taxonomy" id="74533"/>
    <lineage>
        <taxon>Eukaryota</taxon>
        <taxon>Metazoa</taxon>
        <taxon>Chordata</taxon>
        <taxon>Craniata</taxon>
        <taxon>Vertebrata</taxon>
        <taxon>Euteleostomi</taxon>
        <taxon>Mammalia</taxon>
        <taxon>Eutheria</taxon>
        <taxon>Laurasiatheria</taxon>
        <taxon>Carnivora</taxon>
        <taxon>Feliformia</taxon>
        <taxon>Felidae</taxon>
        <taxon>Pantherinae</taxon>
        <taxon>Panthera</taxon>
    </lineage>
</organism>
<sequence>MKAVVLTLAVLFLTGSQARHFWQQDDPQSPWDRVKDLVTVYVDAVKDGGREYVAQFEASALGKQLNLKLLDNWDTLGSTITKLREQIGPVTQEFWDNLEKETEVLRQEMSKDLEEVKQKVQPYLDDFQKKWQEEVELYRQKVAPLGTELRE</sequence>
<comment type="function">
    <text evidence="1">Participates in the reverse transport of cholesterol from tissues to the liver for excretion by promoting cholesterol efflux from tissues and by acting as a cofactor for the lecithin cholesterol acyltransferase (LCAT). As part of the SPAP complex, activates spermatozoa motility (By similarity).</text>
</comment>
<comment type="subunit">
    <text evidence="2 3 4">Homodimer (By similarity). Interacts with APOA1BP and CLU. Component of a sperm activating protein complex (SPAP), consisting of APOA1, an immunoglobulin heavy chain, an immunoglobulin light chain and albumin. Interacts with NDRG1. Interacts with SCGB3A2 (By similarity). Interacts with NAXE and YJEFN3 (By similarity).</text>
</comment>
<comment type="subcellular location">
    <subcellularLocation>
        <location>Secreted</location>
    </subcellularLocation>
</comment>
<comment type="tissue specificity">
    <text>Major protein of plasma HDL, also found in chylomicrons.</text>
</comment>
<comment type="PTM">
    <text evidence="1">Glycosylated.</text>
</comment>
<comment type="PTM">
    <text evidence="1">Palmitoylated.</text>
</comment>
<comment type="PTM">
    <text evidence="1">Phosphorylation sites are present in the extracellular medium.</text>
</comment>
<comment type="similarity">
    <text evidence="6">Belongs to the apolipoprotein A1/A4/E family.</text>
</comment>
<evidence type="ECO:0000250" key="1"/>
<evidence type="ECO:0000250" key="2">
    <source>
        <dbReference type="UniProtKB" id="G5BQH5"/>
    </source>
</evidence>
<evidence type="ECO:0000250" key="3">
    <source>
        <dbReference type="UniProtKB" id="P02647"/>
    </source>
</evidence>
<evidence type="ECO:0000250" key="4">
    <source>
        <dbReference type="UniProtKB" id="P04639"/>
    </source>
</evidence>
<evidence type="ECO:0000255" key="5"/>
<evidence type="ECO:0000305" key="6"/>
<reference key="1">
    <citation type="journal article" date="2013" name="Nat. Commun.">
        <title>The tiger genome and comparative analysis with lion and snow leopard genomes.</title>
        <authorList>
            <person name="Cho Y.S."/>
            <person name="Hu L."/>
            <person name="Hou H."/>
            <person name="Lee H."/>
            <person name="Xu J."/>
            <person name="Kwon S."/>
            <person name="Oh S."/>
            <person name="Kim H.M."/>
            <person name="Jho S."/>
            <person name="Kim S."/>
            <person name="Shin Y.A."/>
            <person name="Kim B.C."/>
            <person name="Kim H."/>
            <person name="Kim C.U."/>
            <person name="Luo S.J."/>
            <person name="Johnson W.E."/>
            <person name="Koepfli K.P."/>
            <person name="Schmidt-Kuntzel A."/>
            <person name="Turner J.A."/>
            <person name="Marker L."/>
            <person name="Harper C."/>
            <person name="Miller S.M."/>
            <person name="Jacobs W."/>
            <person name="Bertola L.D."/>
            <person name="Kim T.H."/>
            <person name="Lee S."/>
            <person name="Zhou Q."/>
            <person name="Jung H.J."/>
            <person name="Xu X."/>
            <person name="Gadhvi P."/>
            <person name="Xu P."/>
            <person name="Xiong Y."/>
            <person name="Luo Y."/>
            <person name="Pan S."/>
            <person name="Gou C."/>
            <person name="Chu X."/>
            <person name="Zhang J."/>
            <person name="Liu S."/>
            <person name="He J."/>
            <person name="Chen Y."/>
            <person name="Yang L."/>
            <person name="Yang Y."/>
            <person name="He J."/>
            <person name="Liu S."/>
            <person name="Wang J."/>
            <person name="Kim C.H."/>
            <person name="Kwak H."/>
            <person name="Kim J.S."/>
            <person name="Hwang S."/>
            <person name="Ko J."/>
            <person name="Kim C.B."/>
            <person name="Kim S."/>
            <person name="Bayarlkhagva D."/>
            <person name="Paek W.K."/>
            <person name="Kim S.J."/>
            <person name="O'Brien S.J."/>
            <person name="Wang J."/>
            <person name="Bhak J."/>
        </authorList>
    </citation>
    <scope>NUCLEOTIDE SEQUENCE [LARGE SCALE GENOMIC DNA]</scope>
</reference>
<reference key="2">
    <citation type="unpublished observations" date="2013-10">
        <authorList>
            <person name="Puppione D.L."/>
        </authorList>
    </citation>
    <scope>IDENTIFICATION</scope>
</reference>
<accession>P0DM92</accession>
<proteinExistence type="evidence at transcript level"/>
<gene>
    <name type="primary">APOA1</name>
</gene>
<keyword id="KW-0153">Cholesterol metabolism</keyword>
<keyword id="KW-0325">Glycoprotein</keyword>
<keyword id="KW-0345">HDL</keyword>
<keyword id="KW-0443">Lipid metabolism</keyword>
<keyword id="KW-0445">Lipid transport</keyword>
<keyword id="KW-0449">Lipoprotein</keyword>
<keyword id="KW-0558">Oxidation</keyword>
<keyword id="KW-0564">Palmitate</keyword>
<keyword id="KW-0597">Phosphoprotein</keyword>
<keyword id="KW-1185">Reference proteome</keyword>
<keyword id="KW-0677">Repeat</keyword>
<keyword id="KW-0964">Secreted</keyword>
<keyword id="KW-0732">Signal</keyword>
<keyword id="KW-0753">Steroid metabolism</keyword>
<keyword id="KW-1207">Sterol metabolism</keyword>
<keyword id="KW-0813">Transport</keyword>
<feature type="signal peptide" evidence="5">
    <location>
        <begin position="1"/>
        <end position="18"/>
    </location>
</feature>
<feature type="propeptide" id="PRO_0000424674" evidence="1">
    <location>
        <begin position="19"/>
        <end position="24"/>
    </location>
</feature>
<feature type="chain" id="PRO_0000424675" description="Apolipoprotein A-I">
    <location>
        <begin position="25"/>
        <end position="151" status="greater than"/>
    </location>
</feature>
<feature type="chain" id="PRO_0000424676" description="Truncated apolipoprotein A-I">
    <location>
        <begin position="25"/>
        <end position="151" status="greater than"/>
    </location>
</feature>
<feature type="repeat" description="1">
    <location>
        <begin position="67"/>
        <end position="88"/>
    </location>
</feature>
<feature type="repeat" description="2">
    <location>
        <begin position="89"/>
        <end position="110"/>
    </location>
</feature>
<feature type="repeat" description="3; half-length">
    <location>
        <begin position="111"/>
        <end position="121"/>
    </location>
</feature>
<feature type="repeat" description="4">
    <location>
        <begin position="122"/>
        <end position="143"/>
    </location>
</feature>
<feature type="region of interest" description="4 X approximate tandem repeats">
    <location>
        <begin position="67"/>
        <end position="143"/>
    </location>
</feature>
<feature type="modified residue" description="Methionine sulfoxide" evidence="1">
    <location>
        <position position="109"/>
    </location>
</feature>
<feature type="non-terminal residue">
    <location>
        <position position="151"/>
    </location>
</feature>
<dbReference type="EMBL" id="ATCQ01045854">
    <property type="status" value="NOT_ANNOTATED_CDS"/>
    <property type="molecule type" value="Genomic_DNA"/>
</dbReference>
<dbReference type="SMR" id="P0DM92"/>
<dbReference type="Proteomes" id="UP000675900">
    <property type="component" value="Unplaced"/>
</dbReference>
<dbReference type="GO" id="GO:0042627">
    <property type="term" value="C:chylomicron"/>
    <property type="evidence" value="ECO:0007669"/>
    <property type="project" value="TreeGrafter"/>
</dbReference>
<dbReference type="GO" id="GO:1903561">
    <property type="term" value="C:extracellular vesicle"/>
    <property type="evidence" value="ECO:0007669"/>
    <property type="project" value="TreeGrafter"/>
</dbReference>
<dbReference type="GO" id="GO:0034364">
    <property type="term" value="C:high-density lipoprotein particle"/>
    <property type="evidence" value="ECO:0007669"/>
    <property type="project" value="UniProtKB-KW"/>
</dbReference>
<dbReference type="GO" id="GO:0034362">
    <property type="term" value="C:low-density lipoprotein particle"/>
    <property type="evidence" value="ECO:0007669"/>
    <property type="project" value="TreeGrafter"/>
</dbReference>
<dbReference type="GO" id="GO:0034361">
    <property type="term" value="C:very-low-density lipoprotein particle"/>
    <property type="evidence" value="ECO:0007669"/>
    <property type="project" value="TreeGrafter"/>
</dbReference>
<dbReference type="GO" id="GO:0120020">
    <property type="term" value="F:cholesterol transfer activity"/>
    <property type="evidence" value="ECO:0007669"/>
    <property type="project" value="TreeGrafter"/>
</dbReference>
<dbReference type="GO" id="GO:0060228">
    <property type="term" value="F:phosphatidylcholine-sterol O-acyltransferase activator activity"/>
    <property type="evidence" value="ECO:0007669"/>
    <property type="project" value="TreeGrafter"/>
</dbReference>
<dbReference type="GO" id="GO:0005543">
    <property type="term" value="F:phospholipid binding"/>
    <property type="evidence" value="ECO:0007669"/>
    <property type="project" value="TreeGrafter"/>
</dbReference>
<dbReference type="GO" id="GO:0042803">
    <property type="term" value="F:protein homodimerization activity"/>
    <property type="evidence" value="ECO:0000250"/>
    <property type="project" value="UniProtKB"/>
</dbReference>
<dbReference type="GO" id="GO:0055090">
    <property type="term" value="P:acylglycerol homeostasis"/>
    <property type="evidence" value="ECO:0007669"/>
    <property type="project" value="TreeGrafter"/>
</dbReference>
<dbReference type="GO" id="GO:0033344">
    <property type="term" value="P:cholesterol efflux"/>
    <property type="evidence" value="ECO:0007669"/>
    <property type="project" value="TreeGrafter"/>
</dbReference>
<dbReference type="GO" id="GO:0008203">
    <property type="term" value="P:cholesterol metabolic process"/>
    <property type="evidence" value="ECO:0007669"/>
    <property type="project" value="UniProtKB-KW"/>
</dbReference>
<dbReference type="GO" id="GO:0042157">
    <property type="term" value="P:lipoprotein metabolic process"/>
    <property type="evidence" value="ECO:0007669"/>
    <property type="project" value="InterPro"/>
</dbReference>
<dbReference type="GO" id="GO:0033700">
    <property type="term" value="P:phospholipid efflux"/>
    <property type="evidence" value="ECO:0007669"/>
    <property type="project" value="TreeGrafter"/>
</dbReference>
<dbReference type="GO" id="GO:0010875">
    <property type="term" value="P:positive regulation of cholesterol efflux"/>
    <property type="evidence" value="ECO:0000250"/>
    <property type="project" value="UniProtKB"/>
</dbReference>
<dbReference type="GO" id="GO:0050766">
    <property type="term" value="P:positive regulation of phagocytosis"/>
    <property type="evidence" value="ECO:0000250"/>
    <property type="project" value="UniProtKB"/>
</dbReference>
<dbReference type="GO" id="GO:1902995">
    <property type="term" value="P:positive regulation of phospholipid efflux"/>
    <property type="evidence" value="ECO:0000250"/>
    <property type="project" value="UniProtKB"/>
</dbReference>
<dbReference type="GO" id="GO:0050821">
    <property type="term" value="P:protein stabilization"/>
    <property type="evidence" value="ECO:0000250"/>
    <property type="project" value="UniProtKB"/>
</dbReference>
<dbReference type="FunFam" id="1.20.120.20:FF:000001">
    <property type="entry name" value="Apolipoprotein A-I"/>
    <property type="match status" value="1"/>
</dbReference>
<dbReference type="Gene3D" id="1.20.120.20">
    <property type="entry name" value="Apolipoprotein"/>
    <property type="match status" value="1"/>
</dbReference>
<dbReference type="InterPro" id="IPR000074">
    <property type="entry name" value="ApoA_E"/>
</dbReference>
<dbReference type="InterPro" id="IPR050163">
    <property type="entry name" value="Apolipoprotein_A1/A4/E"/>
</dbReference>
<dbReference type="PANTHER" id="PTHR18976">
    <property type="entry name" value="APOLIPOPROTEIN"/>
    <property type="match status" value="1"/>
</dbReference>
<dbReference type="PANTHER" id="PTHR18976:SF11">
    <property type="entry name" value="APOLIPOPROTEIN A-I"/>
    <property type="match status" value="1"/>
</dbReference>
<dbReference type="Pfam" id="PF01442">
    <property type="entry name" value="Apolipoprotein"/>
    <property type="match status" value="1"/>
</dbReference>
<dbReference type="SUPFAM" id="SSF47162">
    <property type="entry name" value="Apolipoprotein"/>
    <property type="match status" value="1"/>
</dbReference>
<name>APOA1_PANTA</name>